<comment type="function">
    <text evidence="1">The RuvA-RuvB-RuvC complex processes Holliday junction (HJ) DNA during genetic recombination and DNA repair, while the RuvA-RuvB complex plays an important role in the rescue of blocked DNA replication forks via replication fork reversal (RFR). RuvA specifically binds to HJ cruciform DNA, conferring on it an open structure. The RuvB hexamer acts as an ATP-dependent pump, pulling dsDNA into and through the RuvAB complex. RuvB forms 2 homohexamers on either side of HJ DNA bound by 1 or 2 RuvA tetramers; 4 subunits per hexamer contact DNA at a time. Coordinated motions by a converter formed by DNA-disengaged RuvB subunits stimulates ATP hydrolysis and nucleotide exchange. Immobilization of the converter enables RuvB to convert the ATP-contained energy into a lever motion, pulling 2 nucleotides of DNA out of the RuvA tetramer per ATP hydrolyzed, thus driving DNA branch migration. The RuvB motors rotate together with the DNA substrate, which together with the progressing nucleotide cycle form the mechanistic basis for DNA recombination by continuous HJ branch migration. Branch migration allows RuvC to scan DNA until it finds its consensus sequence, where it cleaves and resolves cruciform DNA.</text>
</comment>
<comment type="function">
    <text evidence="2">Has Mg(2+)-, DNA-dependent ATPase activity; dsDNA and supercoiled DNA but not ssDNA stimulate activity. Binds to linear dsDNA in the absence of ATP or ATP-gamma-S. This subunit can promote Holliday junction migration alone in vitro. Partially complements an E.coli deletion for UV sensitivity.</text>
</comment>
<comment type="catalytic activity">
    <reaction evidence="1 2">
        <text>ATP + H2O = ADP + phosphate + H(+)</text>
        <dbReference type="Rhea" id="RHEA:13065"/>
        <dbReference type="ChEBI" id="CHEBI:15377"/>
        <dbReference type="ChEBI" id="CHEBI:15378"/>
        <dbReference type="ChEBI" id="CHEBI:30616"/>
        <dbReference type="ChEBI" id="CHEBI:43474"/>
        <dbReference type="ChEBI" id="CHEBI:456216"/>
    </reaction>
</comment>
<comment type="activity regulation">
    <text>The ATPase activity of RuvB is enhanced by RuvA.</text>
</comment>
<comment type="biophysicochemical properties">
    <temperatureDependence>
        <text evidence="2">Optimum temperature for ATPase activity is 70 degrees Celsius.</text>
    </temperatureDependence>
</comment>
<comment type="subunit">
    <text evidence="1">Homohexamer. Forms an RuvA(8)-RuvB(12)-Holliday junction (HJ) complex. HJ DNA is sandwiched between 2 RuvA tetramers; dsDNA enters through RuvA and exits via RuvB. An RuvB hexamer assembles on each DNA strand where it exits the tetramer. Each RuvB hexamer is contacted by two RuvA subunits (via domain III) on 2 adjacent RuvB subunits; this complex drives branch migration. In the full resolvosome a probable DNA-RuvA(4)-RuvB(12)-RuvC(2) complex forms which resolves the HJ.</text>
</comment>
<comment type="subcellular location">
    <subcellularLocation>
        <location evidence="1">Cytoplasm</location>
    </subcellularLocation>
</comment>
<comment type="domain">
    <text evidence="1">Has 3 domains, the large (RuvB-L) and small ATPase (RuvB-S) domains and the C-terminal head (RuvB-H) domain. The head domain binds DNA, while the ATPase domains jointly bind ATP, ADP or are empty depending on the state of the subunit in the translocation cycle. During a single DNA translocation step the structure of each domain remains the same, but their relative positions change.</text>
</comment>
<comment type="similarity">
    <text evidence="1">Belongs to the RuvB family.</text>
</comment>
<feature type="chain" id="PRO_0000165620" description="Holliday junction branch migration complex subunit RuvB">
    <location>
        <begin position="1"/>
        <end position="324"/>
    </location>
</feature>
<feature type="region of interest" description="Large ATPase domain (RuvB-L)" evidence="1">
    <location>
        <begin position="1"/>
        <end position="168"/>
    </location>
</feature>
<feature type="region of interest" description="Small ATPAse domain (RuvB-S)" evidence="1">
    <location>
        <begin position="169"/>
        <end position="239"/>
    </location>
</feature>
<feature type="region of interest" description="Head domain (RuvB-H)" evidence="1">
    <location>
        <begin position="242"/>
        <end position="324"/>
    </location>
</feature>
<feature type="binding site" evidence="1">
    <location>
        <position position="6"/>
    </location>
    <ligand>
        <name>ATP</name>
        <dbReference type="ChEBI" id="CHEBI:30616"/>
    </ligand>
</feature>
<feature type="binding site" evidence="1">
    <location>
        <position position="7"/>
    </location>
    <ligand>
        <name>ATP</name>
        <dbReference type="ChEBI" id="CHEBI:30616"/>
    </ligand>
</feature>
<feature type="binding site" evidence="1">
    <location>
        <position position="48"/>
    </location>
    <ligand>
        <name>ATP</name>
        <dbReference type="ChEBI" id="CHEBI:30616"/>
    </ligand>
</feature>
<feature type="binding site" evidence="1">
    <location>
        <position position="51"/>
    </location>
    <ligand>
        <name>ATP</name>
        <dbReference type="ChEBI" id="CHEBI:30616"/>
    </ligand>
</feature>
<feature type="binding site" evidence="1">
    <location>
        <position position="52"/>
    </location>
    <ligand>
        <name>ATP</name>
        <dbReference type="ChEBI" id="CHEBI:30616"/>
    </ligand>
</feature>
<feature type="binding site" evidence="1">
    <location>
        <position position="52"/>
    </location>
    <ligand>
        <name>Mg(2+)</name>
        <dbReference type="ChEBI" id="CHEBI:18420"/>
    </ligand>
</feature>
<feature type="binding site" evidence="1">
    <location>
        <position position="53"/>
    </location>
    <ligand>
        <name>ATP</name>
        <dbReference type="ChEBI" id="CHEBI:30616"/>
    </ligand>
</feature>
<feature type="binding site" evidence="1">
    <location>
        <begin position="115"/>
        <end position="117"/>
    </location>
    <ligand>
        <name>ATP</name>
        <dbReference type="ChEBI" id="CHEBI:30616"/>
    </ligand>
</feature>
<feature type="binding site" evidence="1">
    <location>
        <position position="158"/>
    </location>
    <ligand>
        <name>ATP</name>
        <dbReference type="ChEBI" id="CHEBI:30616"/>
    </ligand>
</feature>
<feature type="binding site" evidence="1">
    <location>
        <position position="168"/>
    </location>
    <ligand>
        <name>ATP</name>
        <dbReference type="ChEBI" id="CHEBI:30616"/>
    </ligand>
</feature>
<feature type="binding site" evidence="1">
    <location>
        <position position="205"/>
    </location>
    <ligand>
        <name>ATP</name>
        <dbReference type="ChEBI" id="CHEBI:30616"/>
    </ligand>
</feature>
<feature type="binding site" evidence="1">
    <location>
        <position position="297"/>
    </location>
    <ligand>
        <name>DNA</name>
        <dbReference type="ChEBI" id="CHEBI:16991"/>
    </ligand>
</feature>
<feature type="binding site" evidence="1">
    <location>
        <position position="302"/>
    </location>
    <ligand>
        <name>DNA</name>
        <dbReference type="ChEBI" id="CHEBI:16991"/>
    </ligand>
</feature>
<keyword id="KW-0067">ATP-binding</keyword>
<keyword id="KW-0963">Cytoplasm</keyword>
<keyword id="KW-0227">DNA damage</keyword>
<keyword id="KW-0233">DNA recombination</keyword>
<keyword id="KW-0234">DNA repair</keyword>
<keyword id="KW-0238">DNA-binding</keyword>
<keyword id="KW-0378">Hydrolase</keyword>
<keyword id="KW-0547">Nucleotide-binding</keyword>
<reference key="1">
    <citation type="journal article" date="1996" name="J. Bacteriol.">
        <title>Cloning, sequencing, and expression of ruvB and characterization of RuvB proteins from two distantly related thermophilic eubacteria.</title>
        <authorList>
            <person name="Tong J."/>
            <person name="Wetmur J.G."/>
        </authorList>
    </citation>
    <scope>NUCLEOTIDE SEQUENCE [GENOMIC DNA]</scope>
    <scope>FUNCTION</scope>
    <scope>CATALYTIC ACTIVITY</scope>
    <scope>BIOPHYSICOCHEMICAL PROPERTIES</scope>
    <scope>DNA-BINDING</scope>
</reference>
<gene>
    <name evidence="1 3" type="primary">ruvB</name>
</gene>
<accession>Q56214</accession>
<accession>Q9RA64</accession>
<evidence type="ECO:0000255" key="1">
    <source>
        <dbReference type="HAMAP-Rule" id="MF_00016"/>
    </source>
</evidence>
<evidence type="ECO:0000269" key="2">
    <source>
    </source>
</evidence>
<evidence type="ECO:0000303" key="3">
    <source>
    </source>
</evidence>
<organism>
    <name type="scientific">Thermus thermophilus</name>
    <dbReference type="NCBI Taxonomy" id="274"/>
    <lineage>
        <taxon>Bacteria</taxon>
        <taxon>Thermotogati</taxon>
        <taxon>Deinococcota</taxon>
        <taxon>Deinococci</taxon>
        <taxon>Thermales</taxon>
        <taxon>Thermaceae</taxon>
        <taxon>Thermus</taxon>
    </lineage>
</organism>
<dbReference type="EC" id="3.6.4.-" evidence="1 2"/>
<dbReference type="EMBL" id="U22817">
    <property type="protein sequence ID" value="AAB03726.2"/>
    <property type="molecule type" value="Genomic_DNA"/>
</dbReference>
<dbReference type="PIR" id="T11851">
    <property type="entry name" value="T11851"/>
</dbReference>
<dbReference type="SMR" id="Q56214"/>
<dbReference type="DIP" id="DIP-41108N"/>
<dbReference type="GO" id="GO:0005737">
    <property type="term" value="C:cytoplasm"/>
    <property type="evidence" value="ECO:0007669"/>
    <property type="project" value="UniProtKB-SubCell"/>
</dbReference>
<dbReference type="GO" id="GO:0048476">
    <property type="term" value="C:Holliday junction resolvase complex"/>
    <property type="evidence" value="ECO:0007669"/>
    <property type="project" value="UniProtKB-UniRule"/>
</dbReference>
<dbReference type="GO" id="GO:0005524">
    <property type="term" value="F:ATP binding"/>
    <property type="evidence" value="ECO:0007669"/>
    <property type="project" value="UniProtKB-UniRule"/>
</dbReference>
<dbReference type="GO" id="GO:0016887">
    <property type="term" value="F:ATP hydrolysis activity"/>
    <property type="evidence" value="ECO:0007669"/>
    <property type="project" value="InterPro"/>
</dbReference>
<dbReference type="GO" id="GO:0000400">
    <property type="term" value="F:four-way junction DNA binding"/>
    <property type="evidence" value="ECO:0007669"/>
    <property type="project" value="UniProtKB-UniRule"/>
</dbReference>
<dbReference type="GO" id="GO:0009378">
    <property type="term" value="F:four-way junction helicase activity"/>
    <property type="evidence" value="ECO:0007669"/>
    <property type="project" value="InterPro"/>
</dbReference>
<dbReference type="GO" id="GO:0006310">
    <property type="term" value="P:DNA recombination"/>
    <property type="evidence" value="ECO:0007669"/>
    <property type="project" value="UniProtKB-UniRule"/>
</dbReference>
<dbReference type="GO" id="GO:0006281">
    <property type="term" value="P:DNA repair"/>
    <property type="evidence" value="ECO:0007669"/>
    <property type="project" value="UniProtKB-UniRule"/>
</dbReference>
<dbReference type="CDD" id="cd00009">
    <property type="entry name" value="AAA"/>
    <property type="match status" value="1"/>
</dbReference>
<dbReference type="Gene3D" id="1.10.8.60">
    <property type="match status" value="1"/>
</dbReference>
<dbReference type="Gene3D" id="3.40.50.300">
    <property type="entry name" value="P-loop containing nucleotide triphosphate hydrolases"/>
    <property type="match status" value="1"/>
</dbReference>
<dbReference type="Gene3D" id="1.10.10.10">
    <property type="entry name" value="Winged helix-like DNA-binding domain superfamily/Winged helix DNA-binding domain"/>
    <property type="match status" value="1"/>
</dbReference>
<dbReference type="HAMAP" id="MF_00016">
    <property type="entry name" value="DNA_HJ_migration_RuvB"/>
    <property type="match status" value="1"/>
</dbReference>
<dbReference type="InterPro" id="IPR003593">
    <property type="entry name" value="AAA+_ATPase"/>
</dbReference>
<dbReference type="InterPro" id="IPR041445">
    <property type="entry name" value="AAA_lid_4"/>
</dbReference>
<dbReference type="InterPro" id="IPR004605">
    <property type="entry name" value="DNA_helicase_Holl-junc_RuvB"/>
</dbReference>
<dbReference type="InterPro" id="IPR027417">
    <property type="entry name" value="P-loop_NTPase"/>
</dbReference>
<dbReference type="InterPro" id="IPR008824">
    <property type="entry name" value="RuvB-like_N"/>
</dbReference>
<dbReference type="InterPro" id="IPR008823">
    <property type="entry name" value="RuvB_C"/>
</dbReference>
<dbReference type="InterPro" id="IPR036388">
    <property type="entry name" value="WH-like_DNA-bd_sf"/>
</dbReference>
<dbReference type="InterPro" id="IPR036390">
    <property type="entry name" value="WH_DNA-bd_sf"/>
</dbReference>
<dbReference type="NCBIfam" id="NF000868">
    <property type="entry name" value="PRK00080.1"/>
    <property type="match status" value="1"/>
</dbReference>
<dbReference type="NCBIfam" id="TIGR00635">
    <property type="entry name" value="ruvB"/>
    <property type="match status" value="1"/>
</dbReference>
<dbReference type="PANTHER" id="PTHR42848">
    <property type="match status" value="1"/>
</dbReference>
<dbReference type="PANTHER" id="PTHR42848:SF1">
    <property type="entry name" value="HOLLIDAY JUNCTION BRANCH MIGRATION COMPLEX SUBUNIT RUVB"/>
    <property type="match status" value="1"/>
</dbReference>
<dbReference type="Pfam" id="PF17864">
    <property type="entry name" value="AAA_lid_4"/>
    <property type="match status" value="1"/>
</dbReference>
<dbReference type="Pfam" id="PF05491">
    <property type="entry name" value="RuvB_C"/>
    <property type="match status" value="1"/>
</dbReference>
<dbReference type="Pfam" id="PF05496">
    <property type="entry name" value="RuvB_N"/>
    <property type="match status" value="1"/>
</dbReference>
<dbReference type="SMART" id="SM00382">
    <property type="entry name" value="AAA"/>
    <property type="match status" value="1"/>
</dbReference>
<dbReference type="SUPFAM" id="SSF52540">
    <property type="entry name" value="P-loop containing nucleoside triphosphate hydrolases"/>
    <property type="match status" value="1"/>
</dbReference>
<dbReference type="SUPFAM" id="SSF46785">
    <property type="entry name" value="Winged helix' DNA-binding domain"/>
    <property type="match status" value="1"/>
</dbReference>
<proteinExistence type="evidence at protein level"/>
<protein>
    <recommendedName>
        <fullName evidence="1">Holliday junction branch migration complex subunit RuvB</fullName>
        <ecNumber evidence="1 2">3.6.4.-</ecNumber>
    </recommendedName>
</protein>
<name>RUVB_THETH</name>
<sequence length="324" mass="36016">MEDLALRPKTLDEYIGQERLKQKLRVYLEAAKARKEPLEHLLLFGPPGLGKTTLAHVIAHELGVNLRVTSGPAIEKPGDLAAILANSLEEGDILFIDEIHRLSRQAEEHLYPAMEDFVMDIVIGQGPAARTIRLELPRFALIGATTRPGLITAPLLSRFGIVEHLEYYTPEELAQGVMRDARLLGVRITEEAALEIGRRSRGTMRVAKRLFRRVRDFAQVEGEEVITRERALEALAALGLDELGLEKRDREILEVLILRFGAGPVGLATLATALSEDPGTLEEVHEPYLIRQGLLKRTPRGRVATELAYRHLGYPPPVGPLLEP</sequence>